<feature type="propeptide" id="PRO_0000459979" evidence="1">
    <location>
        <begin position="1"/>
        <end position="13"/>
    </location>
</feature>
<feature type="chain" id="PRO_1000128824" description="Large ribosomal subunit protein bL27">
    <location>
        <begin position="14"/>
        <end position="100"/>
    </location>
</feature>
<feature type="region of interest" description="Disordered" evidence="3">
    <location>
        <begin position="18"/>
        <end position="39"/>
    </location>
</feature>
<feature type="compositionally biased region" description="Basic and acidic residues" evidence="3">
    <location>
        <begin position="18"/>
        <end position="29"/>
    </location>
</feature>
<dbReference type="EMBL" id="CP001184">
    <property type="protein sequence ID" value="ACI59937.1"/>
    <property type="molecule type" value="Genomic_DNA"/>
</dbReference>
<dbReference type="RefSeq" id="WP_012560236.1">
    <property type="nucleotide sequence ID" value="NC_011374.1"/>
</dbReference>
<dbReference type="SMR" id="B5ZB18"/>
<dbReference type="STRING" id="565575.UUR10_0203"/>
<dbReference type="KEGG" id="uue:UUR10_0203"/>
<dbReference type="eggNOG" id="COG0211">
    <property type="taxonomic scope" value="Bacteria"/>
</dbReference>
<dbReference type="HOGENOM" id="CLU_095424_4_0_14"/>
<dbReference type="OrthoDB" id="9803474at2"/>
<dbReference type="Proteomes" id="UP000002018">
    <property type="component" value="Chromosome"/>
</dbReference>
<dbReference type="GO" id="GO:0022625">
    <property type="term" value="C:cytosolic large ribosomal subunit"/>
    <property type="evidence" value="ECO:0007669"/>
    <property type="project" value="TreeGrafter"/>
</dbReference>
<dbReference type="GO" id="GO:0003735">
    <property type="term" value="F:structural constituent of ribosome"/>
    <property type="evidence" value="ECO:0007669"/>
    <property type="project" value="InterPro"/>
</dbReference>
<dbReference type="GO" id="GO:0006412">
    <property type="term" value="P:translation"/>
    <property type="evidence" value="ECO:0007669"/>
    <property type="project" value="UniProtKB-UniRule"/>
</dbReference>
<dbReference type="FunFam" id="2.40.50.100:FF:000060">
    <property type="entry name" value="Apicoplast ribosomal protein L27"/>
    <property type="match status" value="1"/>
</dbReference>
<dbReference type="Gene3D" id="2.40.50.100">
    <property type="match status" value="1"/>
</dbReference>
<dbReference type="HAMAP" id="MF_00539">
    <property type="entry name" value="Ribosomal_bL27"/>
    <property type="match status" value="1"/>
</dbReference>
<dbReference type="InterPro" id="IPR001684">
    <property type="entry name" value="Ribosomal_bL27"/>
</dbReference>
<dbReference type="InterPro" id="IPR018261">
    <property type="entry name" value="Ribosomal_bL27_CS"/>
</dbReference>
<dbReference type="NCBIfam" id="TIGR00062">
    <property type="entry name" value="L27"/>
    <property type="match status" value="1"/>
</dbReference>
<dbReference type="PANTHER" id="PTHR15893:SF0">
    <property type="entry name" value="LARGE RIBOSOMAL SUBUNIT PROTEIN BL27M"/>
    <property type="match status" value="1"/>
</dbReference>
<dbReference type="PANTHER" id="PTHR15893">
    <property type="entry name" value="RIBOSOMAL PROTEIN L27"/>
    <property type="match status" value="1"/>
</dbReference>
<dbReference type="Pfam" id="PF01016">
    <property type="entry name" value="Ribosomal_L27"/>
    <property type="match status" value="1"/>
</dbReference>
<dbReference type="PRINTS" id="PR00063">
    <property type="entry name" value="RIBOSOMALL27"/>
</dbReference>
<dbReference type="SUPFAM" id="SSF110324">
    <property type="entry name" value="Ribosomal L27 protein-like"/>
    <property type="match status" value="1"/>
</dbReference>
<dbReference type="PROSITE" id="PS00831">
    <property type="entry name" value="RIBOSOMAL_L27"/>
    <property type="match status" value="1"/>
</dbReference>
<sequence>MNKLYWLTDLQLFASKKGVDSSKNGRDSNPKYLGAKLGDGQSTKAGQIIYRQRGNKIYPGLNVGQGKDHTLFAKTAGVVKYTKFMGDKTKVSVLPKEDNK</sequence>
<comment type="PTM">
    <text evidence="1">The N-terminus is cleaved by ribosomal processing cysteine protease Prp.</text>
</comment>
<comment type="similarity">
    <text evidence="2">Belongs to the bacterial ribosomal protein bL27 family.</text>
</comment>
<accession>B5ZB18</accession>
<keyword id="KW-0687">Ribonucleoprotein</keyword>
<keyword id="KW-0689">Ribosomal protein</keyword>
<evidence type="ECO:0000250" key="1">
    <source>
        <dbReference type="UniProtKB" id="Q2FXT0"/>
    </source>
</evidence>
<evidence type="ECO:0000255" key="2">
    <source>
        <dbReference type="HAMAP-Rule" id="MF_00539"/>
    </source>
</evidence>
<evidence type="ECO:0000256" key="3">
    <source>
        <dbReference type="SAM" id="MobiDB-lite"/>
    </source>
</evidence>
<evidence type="ECO:0000305" key="4"/>
<reference key="1">
    <citation type="submission" date="2008-10" db="EMBL/GenBank/DDBJ databases">
        <title>Genome sequence of Ureaplasma urealyticum serovar 10 ATCC-33699.</title>
        <authorList>
            <person name="Shrivastava S."/>
            <person name="Methe B.A."/>
            <person name="Glass J."/>
            <person name="White K."/>
            <person name="Duffy L.B."/>
        </authorList>
    </citation>
    <scope>NUCLEOTIDE SEQUENCE [LARGE SCALE GENOMIC DNA]</scope>
    <source>
        <strain>ATCC 33699 / Western</strain>
    </source>
</reference>
<gene>
    <name evidence="2" type="primary">rpmA</name>
    <name type="ordered locus">UUR10_0203</name>
</gene>
<organism>
    <name type="scientific">Ureaplasma urealyticum serovar 10 (strain ATCC 33699 / Western)</name>
    <dbReference type="NCBI Taxonomy" id="565575"/>
    <lineage>
        <taxon>Bacteria</taxon>
        <taxon>Bacillati</taxon>
        <taxon>Mycoplasmatota</taxon>
        <taxon>Mycoplasmoidales</taxon>
        <taxon>Mycoplasmoidaceae</taxon>
        <taxon>Ureaplasma</taxon>
    </lineage>
</organism>
<name>RL27_UREU1</name>
<protein>
    <recommendedName>
        <fullName evidence="2">Large ribosomal subunit protein bL27</fullName>
    </recommendedName>
    <alternativeName>
        <fullName evidence="4">50S ribosomal protein L27</fullName>
    </alternativeName>
</protein>
<proteinExistence type="inferred from homology"/>